<name>IF2P_ARCFU</name>
<accession>O29490</accession>
<evidence type="ECO:0000250" key="1"/>
<evidence type="ECO:0000305" key="2"/>
<proteinExistence type="inferred from homology"/>
<gene>
    <name type="primary">infB</name>
    <name type="ordered locus">AF_0768</name>
</gene>
<protein>
    <recommendedName>
        <fullName>Probable translation initiation factor IF-2</fullName>
    </recommendedName>
</protein>
<sequence>MSKKKEEAKALRTPIVAVLGHVDHGKTTLLDRIRKSKVVAKEAGGITQHIGATEVPLDVIKQICKDIWKVEVKIPGLLFIDTPGHKAFTNLRRRGGALADLAILIVDINEGFKPQTEEALSILRTFKTPFVVAANKIDRIPGWQSHEDTPFMKSYAMQEDFAKQNLENRLYNLIAELYQRGFSAERFDRISDFTRTVAVVPISALKGEGIPELLLILVGLAQRYLEKNLRLHIEGKGRGTVLEVKEERGLGVTCDAILYDGTLKVGDRIAIAGKDEVIVTNVKAILKPPPVREMRVESKFQSVKSVTAAAGIKIVAPNLENVLAGSEFEVVESEEDIKKFEERVRKEYEEIAIRTDEEGVVLKTDTLGSLEALINELRQEGIPIKKAEVGDVDKRDVVDASANKDELNKVVLAFNVKLLPGVEEEAKKYGVRIFSHEIIYTLIESFVKWREEERLARERQKVEALIKPGKIKLLKEFIFRRSKPAIVGVRVLAGELRRGVDLIKPDGTKVGAVRTMQKEGKNVAIASAGDELAIAIEDVTIGRQLEGDEELYVDVPERHAKVIERDLLDSLDEETKRAFKEFLEIKRKDNPFWGK</sequence>
<feature type="chain" id="PRO_0000137298" description="Probable translation initiation factor IF-2">
    <location>
        <begin position="1"/>
        <end position="595"/>
    </location>
</feature>
<feature type="domain" description="tr-type G">
    <location>
        <begin position="11"/>
        <end position="225"/>
    </location>
</feature>
<feature type="region of interest" description="G1" evidence="1">
    <location>
        <begin position="20"/>
        <end position="27"/>
    </location>
</feature>
<feature type="region of interest" description="G2" evidence="1">
    <location>
        <begin position="45"/>
        <end position="49"/>
    </location>
</feature>
<feature type="region of interest" description="G3" evidence="1">
    <location>
        <begin position="81"/>
        <end position="84"/>
    </location>
</feature>
<feature type="region of interest" description="G4" evidence="1">
    <location>
        <begin position="135"/>
        <end position="138"/>
    </location>
</feature>
<feature type="region of interest" description="G5" evidence="1">
    <location>
        <begin position="203"/>
        <end position="205"/>
    </location>
</feature>
<feature type="binding site" evidence="1">
    <location>
        <begin position="20"/>
        <end position="27"/>
    </location>
    <ligand>
        <name>GTP</name>
        <dbReference type="ChEBI" id="CHEBI:37565"/>
    </ligand>
</feature>
<feature type="binding site" evidence="1">
    <location>
        <begin position="81"/>
        <end position="85"/>
    </location>
    <ligand>
        <name>GTP</name>
        <dbReference type="ChEBI" id="CHEBI:37565"/>
    </ligand>
</feature>
<feature type="binding site" evidence="1">
    <location>
        <begin position="135"/>
        <end position="138"/>
    </location>
    <ligand>
        <name>GTP</name>
        <dbReference type="ChEBI" id="CHEBI:37565"/>
    </ligand>
</feature>
<reference key="1">
    <citation type="journal article" date="1997" name="Nature">
        <title>The complete genome sequence of the hyperthermophilic, sulphate-reducing archaeon Archaeoglobus fulgidus.</title>
        <authorList>
            <person name="Klenk H.-P."/>
            <person name="Clayton R.A."/>
            <person name="Tomb J.-F."/>
            <person name="White O."/>
            <person name="Nelson K.E."/>
            <person name="Ketchum K.A."/>
            <person name="Dodson R.J."/>
            <person name="Gwinn M.L."/>
            <person name="Hickey E.K."/>
            <person name="Peterson J.D."/>
            <person name="Richardson D.L."/>
            <person name="Kerlavage A.R."/>
            <person name="Graham D.E."/>
            <person name="Kyrpides N.C."/>
            <person name="Fleischmann R.D."/>
            <person name="Quackenbush J."/>
            <person name="Lee N.H."/>
            <person name="Sutton G.G."/>
            <person name="Gill S.R."/>
            <person name="Kirkness E.F."/>
            <person name="Dougherty B.A."/>
            <person name="McKenney K."/>
            <person name="Adams M.D."/>
            <person name="Loftus B.J."/>
            <person name="Peterson S.N."/>
            <person name="Reich C.I."/>
            <person name="McNeil L.K."/>
            <person name="Badger J.H."/>
            <person name="Glodek A."/>
            <person name="Zhou L."/>
            <person name="Overbeek R."/>
            <person name="Gocayne J.D."/>
            <person name="Weidman J.F."/>
            <person name="McDonald L.A."/>
            <person name="Utterback T.R."/>
            <person name="Cotton M.D."/>
            <person name="Spriggs T."/>
            <person name="Artiach P."/>
            <person name="Kaine B.P."/>
            <person name="Sykes S.M."/>
            <person name="Sadow P.W."/>
            <person name="D'Andrea K.P."/>
            <person name="Bowman C."/>
            <person name="Fujii C."/>
            <person name="Garland S.A."/>
            <person name="Mason T.M."/>
            <person name="Olsen G.J."/>
            <person name="Fraser C.M."/>
            <person name="Smith H.O."/>
            <person name="Woese C.R."/>
            <person name="Venter J.C."/>
        </authorList>
    </citation>
    <scope>NUCLEOTIDE SEQUENCE [LARGE SCALE GENOMIC DNA]</scope>
    <source>
        <strain>ATCC 49558 / DSM 4304 / JCM 9628 / NBRC 100126 / VC-16</strain>
    </source>
</reference>
<keyword id="KW-0342">GTP-binding</keyword>
<keyword id="KW-0396">Initiation factor</keyword>
<keyword id="KW-0547">Nucleotide-binding</keyword>
<keyword id="KW-0648">Protein biosynthesis</keyword>
<keyword id="KW-1185">Reference proteome</keyword>
<comment type="function">
    <text evidence="1">Function in general translation initiation by promoting the binding of the formylmethionine-tRNA to ribosomes. Seems to function along with eIF-2 (By similarity).</text>
</comment>
<comment type="similarity">
    <text evidence="2">Belongs to the TRAFAC class translation factor GTPase superfamily. Classic translation factor GTPase family. IF-2 subfamily.</text>
</comment>
<organism>
    <name type="scientific">Archaeoglobus fulgidus (strain ATCC 49558 / DSM 4304 / JCM 9628 / NBRC 100126 / VC-16)</name>
    <dbReference type="NCBI Taxonomy" id="224325"/>
    <lineage>
        <taxon>Archaea</taxon>
        <taxon>Methanobacteriati</taxon>
        <taxon>Methanobacteriota</taxon>
        <taxon>Archaeoglobi</taxon>
        <taxon>Archaeoglobales</taxon>
        <taxon>Archaeoglobaceae</taxon>
        <taxon>Archaeoglobus</taxon>
    </lineage>
</organism>
<dbReference type="EMBL" id="AE000782">
    <property type="protein sequence ID" value="AAB90465.1"/>
    <property type="molecule type" value="Genomic_DNA"/>
</dbReference>
<dbReference type="PIR" id="H69345">
    <property type="entry name" value="H69345"/>
</dbReference>
<dbReference type="RefSeq" id="WP_010878271.1">
    <property type="nucleotide sequence ID" value="NC_000917.1"/>
</dbReference>
<dbReference type="SMR" id="O29490"/>
<dbReference type="STRING" id="224325.AF_0768"/>
<dbReference type="PaxDb" id="224325-AF_0768"/>
<dbReference type="EnsemblBacteria" id="AAB90465">
    <property type="protein sequence ID" value="AAB90465"/>
    <property type="gene ID" value="AF_0768"/>
</dbReference>
<dbReference type="GeneID" id="1483985"/>
<dbReference type="KEGG" id="afu:AF_0768"/>
<dbReference type="eggNOG" id="arCOG01560">
    <property type="taxonomic scope" value="Archaea"/>
</dbReference>
<dbReference type="HOGENOM" id="CLU_002656_3_3_2"/>
<dbReference type="OrthoDB" id="30957at2157"/>
<dbReference type="PhylomeDB" id="O29490"/>
<dbReference type="Proteomes" id="UP000002199">
    <property type="component" value="Chromosome"/>
</dbReference>
<dbReference type="GO" id="GO:0005737">
    <property type="term" value="C:cytoplasm"/>
    <property type="evidence" value="ECO:0007669"/>
    <property type="project" value="TreeGrafter"/>
</dbReference>
<dbReference type="GO" id="GO:0005525">
    <property type="term" value="F:GTP binding"/>
    <property type="evidence" value="ECO:0007669"/>
    <property type="project" value="UniProtKB-KW"/>
</dbReference>
<dbReference type="GO" id="GO:0003924">
    <property type="term" value="F:GTPase activity"/>
    <property type="evidence" value="ECO:0007669"/>
    <property type="project" value="UniProtKB-UniRule"/>
</dbReference>
<dbReference type="GO" id="GO:0003743">
    <property type="term" value="F:translation initiation factor activity"/>
    <property type="evidence" value="ECO:0007669"/>
    <property type="project" value="UniProtKB-UniRule"/>
</dbReference>
<dbReference type="CDD" id="cd03703">
    <property type="entry name" value="aeIF5B_II"/>
    <property type="match status" value="1"/>
</dbReference>
<dbReference type="CDD" id="cd16266">
    <property type="entry name" value="IF2_aeIF5B_IV"/>
    <property type="match status" value="1"/>
</dbReference>
<dbReference type="CDD" id="cd01887">
    <property type="entry name" value="IF2_eIF5B"/>
    <property type="match status" value="1"/>
</dbReference>
<dbReference type="FunFam" id="3.40.50.300:FF:000112">
    <property type="entry name" value="Eukaryotic translation initiation factor 5B"/>
    <property type="match status" value="1"/>
</dbReference>
<dbReference type="FunFam" id="2.40.30.10:FF:000013">
    <property type="entry name" value="eukaryotic translation initiation factor 5B"/>
    <property type="match status" value="1"/>
</dbReference>
<dbReference type="FunFam" id="3.40.50.10050:FF:000001">
    <property type="entry name" value="Translation initiation factor IF-2"/>
    <property type="match status" value="1"/>
</dbReference>
<dbReference type="Gene3D" id="3.40.50.300">
    <property type="entry name" value="P-loop containing nucleotide triphosphate hydrolases"/>
    <property type="match status" value="1"/>
</dbReference>
<dbReference type="Gene3D" id="2.40.30.10">
    <property type="entry name" value="Translation factors"/>
    <property type="match status" value="2"/>
</dbReference>
<dbReference type="Gene3D" id="3.40.50.10050">
    <property type="entry name" value="Translation initiation factor IF- 2, domain 3"/>
    <property type="match status" value="1"/>
</dbReference>
<dbReference type="HAMAP" id="MF_00100_A">
    <property type="entry name" value="IF_2_A"/>
    <property type="match status" value="1"/>
</dbReference>
<dbReference type="InterPro" id="IPR029459">
    <property type="entry name" value="EFTU-type"/>
</dbReference>
<dbReference type="InterPro" id="IPR027417">
    <property type="entry name" value="P-loop_NTPase"/>
</dbReference>
<dbReference type="InterPro" id="IPR005225">
    <property type="entry name" value="Small_GTP-bd"/>
</dbReference>
<dbReference type="InterPro" id="IPR000795">
    <property type="entry name" value="T_Tr_GTP-bd_dom"/>
</dbReference>
<dbReference type="InterPro" id="IPR004544">
    <property type="entry name" value="TF_aIF-2_arc"/>
</dbReference>
<dbReference type="InterPro" id="IPR015760">
    <property type="entry name" value="TIF_IF2"/>
</dbReference>
<dbReference type="InterPro" id="IPR023115">
    <property type="entry name" value="TIF_IF2_dom3"/>
</dbReference>
<dbReference type="InterPro" id="IPR036925">
    <property type="entry name" value="TIF_IF2_dom3_sf"/>
</dbReference>
<dbReference type="InterPro" id="IPR009000">
    <property type="entry name" value="Transl_B-barrel_sf"/>
</dbReference>
<dbReference type="NCBIfam" id="TIGR00491">
    <property type="entry name" value="aIF-2"/>
    <property type="match status" value="1"/>
</dbReference>
<dbReference type="NCBIfam" id="NF003078">
    <property type="entry name" value="PRK04004.1"/>
    <property type="match status" value="1"/>
</dbReference>
<dbReference type="NCBIfam" id="NF011418">
    <property type="entry name" value="PRK14845.1"/>
    <property type="match status" value="1"/>
</dbReference>
<dbReference type="NCBIfam" id="TIGR00231">
    <property type="entry name" value="small_GTP"/>
    <property type="match status" value="1"/>
</dbReference>
<dbReference type="PANTHER" id="PTHR43381:SF4">
    <property type="entry name" value="EUKARYOTIC TRANSLATION INITIATION FACTOR 5B"/>
    <property type="match status" value="1"/>
</dbReference>
<dbReference type="PANTHER" id="PTHR43381">
    <property type="entry name" value="TRANSLATION INITIATION FACTOR IF-2-RELATED"/>
    <property type="match status" value="1"/>
</dbReference>
<dbReference type="Pfam" id="PF00009">
    <property type="entry name" value="GTP_EFTU"/>
    <property type="match status" value="1"/>
</dbReference>
<dbReference type="Pfam" id="PF14578">
    <property type="entry name" value="GTP_EFTU_D4"/>
    <property type="match status" value="1"/>
</dbReference>
<dbReference type="Pfam" id="PF11987">
    <property type="entry name" value="IF-2"/>
    <property type="match status" value="1"/>
</dbReference>
<dbReference type="PRINTS" id="PR00315">
    <property type="entry name" value="ELONGATNFCT"/>
</dbReference>
<dbReference type="SUPFAM" id="SSF52156">
    <property type="entry name" value="Initiation factor IF2/eIF5b, domain 3"/>
    <property type="match status" value="1"/>
</dbReference>
<dbReference type="SUPFAM" id="SSF52540">
    <property type="entry name" value="P-loop containing nucleoside triphosphate hydrolases"/>
    <property type="match status" value="1"/>
</dbReference>
<dbReference type="SUPFAM" id="SSF50447">
    <property type="entry name" value="Translation proteins"/>
    <property type="match status" value="1"/>
</dbReference>
<dbReference type="PROSITE" id="PS51722">
    <property type="entry name" value="G_TR_2"/>
    <property type="match status" value="1"/>
</dbReference>